<name>PYRG_NITV9</name>
<organism>
    <name type="scientific">Nitratidesulfovibrio vulgaris (strain DSM 19637 / Miyazaki F)</name>
    <name type="common">Desulfovibrio vulgaris</name>
    <dbReference type="NCBI Taxonomy" id="883"/>
    <lineage>
        <taxon>Bacteria</taxon>
        <taxon>Pseudomonadati</taxon>
        <taxon>Thermodesulfobacteriota</taxon>
        <taxon>Desulfovibrionia</taxon>
        <taxon>Desulfovibrionales</taxon>
        <taxon>Desulfovibrionaceae</taxon>
        <taxon>Nitratidesulfovibrio</taxon>
    </lineage>
</organism>
<reference key="1">
    <citation type="submission" date="2008-10" db="EMBL/GenBank/DDBJ databases">
        <title>Complete sequence of Desulfovibrio vulgaris str. 'Miyazaki F'.</title>
        <authorList>
            <person name="Lucas S."/>
            <person name="Copeland A."/>
            <person name="Lapidus A."/>
            <person name="Glavina del Rio T."/>
            <person name="Dalin E."/>
            <person name="Tice H."/>
            <person name="Bruce D."/>
            <person name="Goodwin L."/>
            <person name="Pitluck S."/>
            <person name="Sims D."/>
            <person name="Brettin T."/>
            <person name="Detter J.C."/>
            <person name="Han C."/>
            <person name="Larimer F."/>
            <person name="Land M."/>
            <person name="Hauser L."/>
            <person name="Kyrpides N."/>
            <person name="Mikhailova N."/>
            <person name="Hazen T.C."/>
            <person name="Richardson P."/>
        </authorList>
    </citation>
    <scope>NUCLEOTIDE SEQUENCE [LARGE SCALE GENOMIC DNA]</scope>
    <source>
        <strain>DSM 19637 / Miyazaki F</strain>
    </source>
</reference>
<feature type="chain" id="PRO_1000139435" description="CTP synthase">
    <location>
        <begin position="1"/>
        <end position="550"/>
    </location>
</feature>
<feature type="domain" description="Glutamine amidotransferase type-1" evidence="1">
    <location>
        <begin position="292"/>
        <end position="545"/>
    </location>
</feature>
<feature type="region of interest" description="Amidoligase domain" evidence="1">
    <location>
        <begin position="1"/>
        <end position="267"/>
    </location>
</feature>
<feature type="active site" description="Nucleophile; for glutamine hydrolysis" evidence="1">
    <location>
        <position position="381"/>
    </location>
</feature>
<feature type="active site" evidence="1">
    <location>
        <position position="518"/>
    </location>
</feature>
<feature type="active site" evidence="1">
    <location>
        <position position="520"/>
    </location>
</feature>
<feature type="binding site" evidence="1">
    <location>
        <position position="14"/>
    </location>
    <ligand>
        <name>CTP</name>
        <dbReference type="ChEBI" id="CHEBI:37563"/>
        <note>allosteric inhibitor</note>
    </ligand>
</feature>
<feature type="binding site" evidence="1">
    <location>
        <position position="14"/>
    </location>
    <ligand>
        <name>UTP</name>
        <dbReference type="ChEBI" id="CHEBI:46398"/>
    </ligand>
</feature>
<feature type="binding site" evidence="1">
    <location>
        <begin position="15"/>
        <end position="20"/>
    </location>
    <ligand>
        <name>ATP</name>
        <dbReference type="ChEBI" id="CHEBI:30616"/>
    </ligand>
</feature>
<feature type="binding site" evidence="1">
    <location>
        <position position="72"/>
    </location>
    <ligand>
        <name>ATP</name>
        <dbReference type="ChEBI" id="CHEBI:30616"/>
    </ligand>
</feature>
<feature type="binding site" evidence="1">
    <location>
        <position position="72"/>
    </location>
    <ligand>
        <name>Mg(2+)</name>
        <dbReference type="ChEBI" id="CHEBI:18420"/>
    </ligand>
</feature>
<feature type="binding site" evidence="1">
    <location>
        <position position="141"/>
    </location>
    <ligand>
        <name>Mg(2+)</name>
        <dbReference type="ChEBI" id="CHEBI:18420"/>
    </ligand>
</feature>
<feature type="binding site" evidence="1">
    <location>
        <begin position="148"/>
        <end position="150"/>
    </location>
    <ligand>
        <name>CTP</name>
        <dbReference type="ChEBI" id="CHEBI:37563"/>
        <note>allosteric inhibitor</note>
    </ligand>
</feature>
<feature type="binding site" evidence="1">
    <location>
        <begin position="188"/>
        <end position="193"/>
    </location>
    <ligand>
        <name>CTP</name>
        <dbReference type="ChEBI" id="CHEBI:37563"/>
        <note>allosteric inhibitor</note>
    </ligand>
</feature>
<feature type="binding site" evidence="1">
    <location>
        <begin position="188"/>
        <end position="193"/>
    </location>
    <ligand>
        <name>UTP</name>
        <dbReference type="ChEBI" id="CHEBI:46398"/>
    </ligand>
</feature>
<feature type="binding site" evidence="1">
    <location>
        <position position="224"/>
    </location>
    <ligand>
        <name>CTP</name>
        <dbReference type="ChEBI" id="CHEBI:37563"/>
        <note>allosteric inhibitor</note>
    </ligand>
</feature>
<feature type="binding site" evidence="1">
    <location>
        <position position="224"/>
    </location>
    <ligand>
        <name>UTP</name>
        <dbReference type="ChEBI" id="CHEBI:46398"/>
    </ligand>
</feature>
<feature type="binding site" evidence="1">
    <location>
        <position position="354"/>
    </location>
    <ligand>
        <name>L-glutamine</name>
        <dbReference type="ChEBI" id="CHEBI:58359"/>
    </ligand>
</feature>
<feature type="binding site" evidence="1">
    <location>
        <begin position="382"/>
        <end position="385"/>
    </location>
    <ligand>
        <name>L-glutamine</name>
        <dbReference type="ChEBI" id="CHEBI:58359"/>
    </ligand>
</feature>
<feature type="binding site" evidence="1">
    <location>
        <position position="405"/>
    </location>
    <ligand>
        <name>L-glutamine</name>
        <dbReference type="ChEBI" id="CHEBI:58359"/>
    </ligand>
</feature>
<feature type="binding site" evidence="1">
    <location>
        <position position="473"/>
    </location>
    <ligand>
        <name>L-glutamine</name>
        <dbReference type="ChEBI" id="CHEBI:58359"/>
    </ligand>
</feature>
<sequence length="550" mass="61085">MKTKFIFITGGVLSSLGKGLAAASIGALLKARGLKVTIQKLDPYINVDPGTMNPFQHGEVYVTDDGAETDLDLGHYERYLGESLSQKNNYTSGSIYNRVITKERRGDYLGGTVQVIPHVTDEIKNAILGLAEDEPDVALIEIGGTVGDIEGLPFLEAIRQLRGDLGKDHCLYVHLTLVPYLKAAGEHKTKPTQHSVKELRSIGIQPDIILCRCEKAISAELKRKIALFCDVDQDAVFSSVDVDNIYEVPLRFYEEGFDQKIAIMLRLPAKNANLESWETLIHTCSHPEGQVTIGIVGKYVDLKEAYKSLHEALIHGGVANKVKVNLRYVNSEEITEANVAEKLAGCDGILVPGGFGHRGVEGKIRSIRHAREHKIPFFGICLGMQCAVIEYARNVLGLADANSEEFNELTDNKVIYLMTEWYDFRKGAVERRDASSDKGGTLRLGAYPCVVVPGTRAWDAYGAERVDERHRHRFEFNKAYFEAMAEKGLVFSGLSPDGELVEIVELPDHPWFLGCQFHPEFKSNPMRPHPLFREFIKAAKKEAMGGKKGK</sequence>
<dbReference type="EC" id="6.3.4.2" evidence="1"/>
<dbReference type="EMBL" id="CP001197">
    <property type="protein sequence ID" value="ACL07390.1"/>
    <property type="molecule type" value="Genomic_DNA"/>
</dbReference>
<dbReference type="SMR" id="B8DJR8"/>
<dbReference type="STRING" id="883.DvMF_0433"/>
<dbReference type="MEROPS" id="C26.964"/>
<dbReference type="KEGG" id="dvm:DvMF_0433"/>
<dbReference type="eggNOG" id="COG0504">
    <property type="taxonomic scope" value="Bacteria"/>
</dbReference>
<dbReference type="HOGENOM" id="CLU_011675_5_0_7"/>
<dbReference type="OrthoDB" id="9801107at2"/>
<dbReference type="UniPathway" id="UPA00159">
    <property type="reaction ID" value="UER00277"/>
</dbReference>
<dbReference type="GO" id="GO:0005829">
    <property type="term" value="C:cytosol"/>
    <property type="evidence" value="ECO:0007669"/>
    <property type="project" value="TreeGrafter"/>
</dbReference>
<dbReference type="GO" id="GO:0005524">
    <property type="term" value="F:ATP binding"/>
    <property type="evidence" value="ECO:0007669"/>
    <property type="project" value="UniProtKB-KW"/>
</dbReference>
<dbReference type="GO" id="GO:0003883">
    <property type="term" value="F:CTP synthase activity"/>
    <property type="evidence" value="ECO:0007669"/>
    <property type="project" value="UniProtKB-UniRule"/>
</dbReference>
<dbReference type="GO" id="GO:0004359">
    <property type="term" value="F:glutaminase activity"/>
    <property type="evidence" value="ECO:0007669"/>
    <property type="project" value="RHEA"/>
</dbReference>
<dbReference type="GO" id="GO:0042802">
    <property type="term" value="F:identical protein binding"/>
    <property type="evidence" value="ECO:0007669"/>
    <property type="project" value="TreeGrafter"/>
</dbReference>
<dbReference type="GO" id="GO:0046872">
    <property type="term" value="F:metal ion binding"/>
    <property type="evidence" value="ECO:0007669"/>
    <property type="project" value="UniProtKB-KW"/>
</dbReference>
<dbReference type="GO" id="GO:0044210">
    <property type="term" value="P:'de novo' CTP biosynthetic process"/>
    <property type="evidence" value="ECO:0007669"/>
    <property type="project" value="UniProtKB-UniRule"/>
</dbReference>
<dbReference type="GO" id="GO:0019856">
    <property type="term" value="P:pyrimidine nucleobase biosynthetic process"/>
    <property type="evidence" value="ECO:0007669"/>
    <property type="project" value="TreeGrafter"/>
</dbReference>
<dbReference type="CDD" id="cd03113">
    <property type="entry name" value="CTPS_N"/>
    <property type="match status" value="1"/>
</dbReference>
<dbReference type="CDD" id="cd01746">
    <property type="entry name" value="GATase1_CTP_Synthase"/>
    <property type="match status" value="1"/>
</dbReference>
<dbReference type="FunFam" id="3.40.50.300:FF:000009">
    <property type="entry name" value="CTP synthase"/>
    <property type="match status" value="1"/>
</dbReference>
<dbReference type="FunFam" id="3.40.50.880:FF:000002">
    <property type="entry name" value="CTP synthase"/>
    <property type="match status" value="1"/>
</dbReference>
<dbReference type="Gene3D" id="3.40.50.880">
    <property type="match status" value="1"/>
</dbReference>
<dbReference type="Gene3D" id="3.40.50.300">
    <property type="entry name" value="P-loop containing nucleotide triphosphate hydrolases"/>
    <property type="match status" value="1"/>
</dbReference>
<dbReference type="HAMAP" id="MF_01227">
    <property type="entry name" value="PyrG"/>
    <property type="match status" value="1"/>
</dbReference>
<dbReference type="InterPro" id="IPR029062">
    <property type="entry name" value="Class_I_gatase-like"/>
</dbReference>
<dbReference type="InterPro" id="IPR004468">
    <property type="entry name" value="CTP_synthase"/>
</dbReference>
<dbReference type="InterPro" id="IPR017456">
    <property type="entry name" value="CTP_synthase_N"/>
</dbReference>
<dbReference type="InterPro" id="IPR017926">
    <property type="entry name" value="GATASE"/>
</dbReference>
<dbReference type="InterPro" id="IPR033828">
    <property type="entry name" value="GATase1_CTP_Synthase"/>
</dbReference>
<dbReference type="InterPro" id="IPR027417">
    <property type="entry name" value="P-loop_NTPase"/>
</dbReference>
<dbReference type="NCBIfam" id="NF003792">
    <property type="entry name" value="PRK05380.1"/>
    <property type="match status" value="1"/>
</dbReference>
<dbReference type="NCBIfam" id="TIGR00337">
    <property type="entry name" value="PyrG"/>
    <property type="match status" value="1"/>
</dbReference>
<dbReference type="PANTHER" id="PTHR11550">
    <property type="entry name" value="CTP SYNTHASE"/>
    <property type="match status" value="1"/>
</dbReference>
<dbReference type="PANTHER" id="PTHR11550:SF0">
    <property type="entry name" value="CTP SYNTHASE-RELATED"/>
    <property type="match status" value="1"/>
</dbReference>
<dbReference type="Pfam" id="PF06418">
    <property type="entry name" value="CTP_synth_N"/>
    <property type="match status" value="1"/>
</dbReference>
<dbReference type="Pfam" id="PF00117">
    <property type="entry name" value="GATase"/>
    <property type="match status" value="1"/>
</dbReference>
<dbReference type="SUPFAM" id="SSF52317">
    <property type="entry name" value="Class I glutamine amidotransferase-like"/>
    <property type="match status" value="1"/>
</dbReference>
<dbReference type="SUPFAM" id="SSF52540">
    <property type="entry name" value="P-loop containing nucleoside triphosphate hydrolases"/>
    <property type="match status" value="1"/>
</dbReference>
<dbReference type="PROSITE" id="PS51273">
    <property type="entry name" value="GATASE_TYPE_1"/>
    <property type="match status" value="1"/>
</dbReference>
<proteinExistence type="inferred from homology"/>
<accession>B8DJR8</accession>
<keyword id="KW-0067">ATP-binding</keyword>
<keyword id="KW-0315">Glutamine amidotransferase</keyword>
<keyword id="KW-0436">Ligase</keyword>
<keyword id="KW-0460">Magnesium</keyword>
<keyword id="KW-0479">Metal-binding</keyword>
<keyword id="KW-0547">Nucleotide-binding</keyword>
<keyword id="KW-0665">Pyrimidine biosynthesis</keyword>
<comment type="function">
    <text evidence="1">Catalyzes the ATP-dependent amination of UTP to CTP with either L-glutamine or ammonia as the source of nitrogen. Regulates intracellular CTP levels through interactions with the four ribonucleotide triphosphates.</text>
</comment>
<comment type="catalytic activity">
    <reaction evidence="1">
        <text>UTP + L-glutamine + ATP + H2O = CTP + L-glutamate + ADP + phosphate + 2 H(+)</text>
        <dbReference type="Rhea" id="RHEA:26426"/>
        <dbReference type="ChEBI" id="CHEBI:15377"/>
        <dbReference type="ChEBI" id="CHEBI:15378"/>
        <dbReference type="ChEBI" id="CHEBI:29985"/>
        <dbReference type="ChEBI" id="CHEBI:30616"/>
        <dbReference type="ChEBI" id="CHEBI:37563"/>
        <dbReference type="ChEBI" id="CHEBI:43474"/>
        <dbReference type="ChEBI" id="CHEBI:46398"/>
        <dbReference type="ChEBI" id="CHEBI:58359"/>
        <dbReference type="ChEBI" id="CHEBI:456216"/>
        <dbReference type="EC" id="6.3.4.2"/>
    </reaction>
</comment>
<comment type="catalytic activity">
    <reaction evidence="1">
        <text>L-glutamine + H2O = L-glutamate + NH4(+)</text>
        <dbReference type="Rhea" id="RHEA:15889"/>
        <dbReference type="ChEBI" id="CHEBI:15377"/>
        <dbReference type="ChEBI" id="CHEBI:28938"/>
        <dbReference type="ChEBI" id="CHEBI:29985"/>
        <dbReference type="ChEBI" id="CHEBI:58359"/>
    </reaction>
</comment>
<comment type="catalytic activity">
    <reaction evidence="1">
        <text>UTP + NH4(+) + ATP = CTP + ADP + phosphate + 2 H(+)</text>
        <dbReference type="Rhea" id="RHEA:16597"/>
        <dbReference type="ChEBI" id="CHEBI:15378"/>
        <dbReference type="ChEBI" id="CHEBI:28938"/>
        <dbReference type="ChEBI" id="CHEBI:30616"/>
        <dbReference type="ChEBI" id="CHEBI:37563"/>
        <dbReference type="ChEBI" id="CHEBI:43474"/>
        <dbReference type="ChEBI" id="CHEBI:46398"/>
        <dbReference type="ChEBI" id="CHEBI:456216"/>
    </reaction>
</comment>
<comment type="activity regulation">
    <text evidence="1">Allosterically activated by GTP, when glutamine is the substrate; GTP has no effect on the reaction when ammonia is the substrate. The allosteric effector GTP functions by stabilizing the protein conformation that binds the tetrahedral intermediate(s) formed during glutamine hydrolysis. Inhibited by the product CTP, via allosteric rather than competitive inhibition.</text>
</comment>
<comment type="pathway">
    <text evidence="1">Pyrimidine metabolism; CTP biosynthesis via de novo pathway; CTP from UDP: step 2/2.</text>
</comment>
<comment type="subunit">
    <text evidence="1">Homotetramer.</text>
</comment>
<comment type="miscellaneous">
    <text evidence="1">CTPSs have evolved a hybrid strategy for distinguishing between UTP and CTP. The overlapping regions of the product feedback inhibitory and substrate sites recognize a common feature in both compounds, the triphosphate moiety. To differentiate isosteric substrate and product pyrimidine rings, an additional pocket far from the expected kinase/ligase catalytic site, specifically recognizes the cytosine and ribose portions of the product inhibitor.</text>
</comment>
<comment type="similarity">
    <text evidence="1">Belongs to the CTP synthase family.</text>
</comment>
<evidence type="ECO:0000255" key="1">
    <source>
        <dbReference type="HAMAP-Rule" id="MF_01227"/>
    </source>
</evidence>
<protein>
    <recommendedName>
        <fullName evidence="1">CTP synthase</fullName>
        <ecNumber evidence="1">6.3.4.2</ecNumber>
    </recommendedName>
    <alternativeName>
        <fullName evidence="1">Cytidine 5'-triphosphate synthase</fullName>
    </alternativeName>
    <alternativeName>
        <fullName evidence="1">Cytidine triphosphate synthetase</fullName>
        <shortName evidence="1">CTP synthetase</shortName>
        <shortName evidence="1">CTPS</shortName>
    </alternativeName>
    <alternativeName>
        <fullName evidence="1">UTP--ammonia ligase</fullName>
    </alternativeName>
</protein>
<gene>
    <name evidence="1" type="primary">pyrG</name>
    <name type="ordered locus">DvMF_0433</name>
</gene>